<comment type="function">
    <text evidence="1">Cell wall formation. Adds enolpyruvyl to UDP-N-acetylglucosamine.</text>
</comment>
<comment type="catalytic activity">
    <reaction evidence="1">
        <text>phosphoenolpyruvate + UDP-N-acetyl-alpha-D-glucosamine = UDP-N-acetyl-3-O-(1-carboxyvinyl)-alpha-D-glucosamine + phosphate</text>
        <dbReference type="Rhea" id="RHEA:18681"/>
        <dbReference type="ChEBI" id="CHEBI:43474"/>
        <dbReference type="ChEBI" id="CHEBI:57705"/>
        <dbReference type="ChEBI" id="CHEBI:58702"/>
        <dbReference type="ChEBI" id="CHEBI:68483"/>
        <dbReference type="EC" id="2.5.1.7"/>
    </reaction>
</comment>
<comment type="pathway">
    <text evidence="1">Cell wall biogenesis; peptidoglycan biosynthesis.</text>
</comment>
<comment type="subcellular location">
    <subcellularLocation>
        <location evidence="1">Cytoplasm</location>
    </subcellularLocation>
</comment>
<comment type="similarity">
    <text evidence="1">Belongs to the EPSP synthase family. MurA subfamily.</text>
</comment>
<evidence type="ECO:0000255" key="1">
    <source>
        <dbReference type="HAMAP-Rule" id="MF_00111"/>
    </source>
</evidence>
<reference key="1">
    <citation type="journal article" date="2004" name="Proc. Natl. Acad. Sci. U.S.A.">
        <title>Complete genomes of two clinical Staphylococcus aureus strains: evidence for the rapid evolution of virulence and drug resistance.</title>
        <authorList>
            <person name="Holden M.T.G."/>
            <person name="Feil E.J."/>
            <person name="Lindsay J.A."/>
            <person name="Peacock S.J."/>
            <person name="Day N.P.J."/>
            <person name="Enright M.C."/>
            <person name="Foster T.J."/>
            <person name="Moore C.E."/>
            <person name="Hurst L."/>
            <person name="Atkin R."/>
            <person name="Barron A."/>
            <person name="Bason N."/>
            <person name="Bentley S.D."/>
            <person name="Chillingworth C."/>
            <person name="Chillingworth T."/>
            <person name="Churcher C."/>
            <person name="Clark L."/>
            <person name="Corton C."/>
            <person name="Cronin A."/>
            <person name="Doggett J."/>
            <person name="Dowd L."/>
            <person name="Feltwell T."/>
            <person name="Hance Z."/>
            <person name="Harris B."/>
            <person name="Hauser H."/>
            <person name="Holroyd S."/>
            <person name="Jagels K."/>
            <person name="James K.D."/>
            <person name="Lennard N."/>
            <person name="Line A."/>
            <person name="Mayes R."/>
            <person name="Moule S."/>
            <person name="Mungall K."/>
            <person name="Ormond D."/>
            <person name="Quail M.A."/>
            <person name="Rabbinowitsch E."/>
            <person name="Rutherford K.M."/>
            <person name="Sanders M."/>
            <person name="Sharp S."/>
            <person name="Simmonds M."/>
            <person name="Stevens K."/>
            <person name="Whitehead S."/>
            <person name="Barrell B.G."/>
            <person name="Spratt B.G."/>
            <person name="Parkhill J."/>
        </authorList>
    </citation>
    <scope>NUCLEOTIDE SEQUENCE [LARGE SCALE GENOMIC DNA]</scope>
    <source>
        <strain>MSSA476</strain>
    </source>
</reference>
<sequence length="419" mass="45105">MAQEVIKIRGGRTLNGEVNISGAKNSAVAIIPATLLAQGHVKLEGLPQISDVKTLVSLLEDLNIKASLNGMELEVDTTEIQNAALPNNKVESLRASYYMMGAMLGRFKKCVIGLPGGCPLGPRPIDQHIKGFKALGAEIDESSTTSMKIEAKELKGAHIFLDMVSVGATINIMLAAVYATGQTVIENAAKEPEVVDVANFLTSMGANIKGAGTSTIKINGVKELHGSEYQVIPDRIEAGTYMCIAAACGENVILNNIVPKHVETLTAKFSELGVNVDVRDERIRINNNAPYQFVDIKTLVYPGFATDLQQPITPLLFMANGPSFVTDTIYPERFKHVEELKRMGANIEVDEGTATIKPSTLHGAEVYASDLRAGACLIIAGLIAEGVTTIYNVKHIYRGYTDIVEHLKALGADIWTETV</sequence>
<dbReference type="EC" id="2.5.1.7" evidence="1"/>
<dbReference type="EMBL" id="BX571857">
    <property type="protein sequence ID" value="CAG43835.1"/>
    <property type="molecule type" value="Genomic_DNA"/>
</dbReference>
<dbReference type="RefSeq" id="WP_000046597.1">
    <property type="nucleotide sequence ID" value="NC_002953.3"/>
</dbReference>
<dbReference type="SMR" id="Q6G7I6"/>
<dbReference type="KEGG" id="sas:SAS2027"/>
<dbReference type="HOGENOM" id="CLU_027387_0_0_9"/>
<dbReference type="UniPathway" id="UPA00219"/>
<dbReference type="GO" id="GO:0005737">
    <property type="term" value="C:cytoplasm"/>
    <property type="evidence" value="ECO:0007669"/>
    <property type="project" value="UniProtKB-SubCell"/>
</dbReference>
<dbReference type="GO" id="GO:0008760">
    <property type="term" value="F:UDP-N-acetylglucosamine 1-carboxyvinyltransferase activity"/>
    <property type="evidence" value="ECO:0007669"/>
    <property type="project" value="UniProtKB-UniRule"/>
</dbReference>
<dbReference type="GO" id="GO:0051301">
    <property type="term" value="P:cell division"/>
    <property type="evidence" value="ECO:0007669"/>
    <property type="project" value="UniProtKB-KW"/>
</dbReference>
<dbReference type="GO" id="GO:0071555">
    <property type="term" value="P:cell wall organization"/>
    <property type="evidence" value="ECO:0007669"/>
    <property type="project" value="UniProtKB-KW"/>
</dbReference>
<dbReference type="GO" id="GO:0009252">
    <property type="term" value="P:peptidoglycan biosynthetic process"/>
    <property type="evidence" value="ECO:0007669"/>
    <property type="project" value="UniProtKB-UniRule"/>
</dbReference>
<dbReference type="GO" id="GO:0008360">
    <property type="term" value="P:regulation of cell shape"/>
    <property type="evidence" value="ECO:0007669"/>
    <property type="project" value="UniProtKB-KW"/>
</dbReference>
<dbReference type="GO" id="GO:0019277">
    <property type="term" value="P:UDP-N-acetylgalactosamine biosynthetic process"/>
    <property type="evidence" value="ECO:0007669"/>
    <property type="project" value="InterPro"/>
</dbReference>
<dbReference type="CDD" id="cd01555">
    <property type="entry name" value="UdpNAET"/>
    <property type="match status" value="1"/>
</dbReference>
<dbReference type="FunFam" id="3.65.10.10:FF:000001">
    <property type="entry name" value="UDP-N-acetylglucosamine 1-carboxyvinyltransferase"/>
    <property type="match status" value="1"/>
</dbReference>
<dbReference type="Gene3D" id="3.65.10.10">
    <property type="entry name" value="Enolpyruvate transferase domain"/>
    <property type="match status" value="2"/>
</dbReference>
<dbReference type="HAMAP" id="MF_00111">
    <property type="entry name" value="MurA"/>
    <property type="match status" value="1"/>
</dbReference>
<dbReference type="InterPro" id="IPR001986">
    <property type="entry name" value="Enolpyruvate_Tfrase_dom"/>
</dbReference>
<dbReference type="InterPro" id="IPR036968">
    <property type="entry name" value="Enolpyruvate_Tfrase_sf"/>
</dbReference>
<dbReference type="InterPro" id="IPR050068">
    <property type="entry name" value="MurA_subfamily"/>
</dbReference>
<dbReference type="InterPro" id="IPR013792">
    <property type="entry name" value="RNA3'P_cycl/enolpyr_Trfase_a/b"/>
</dbReference>
<dbReference type="InterPro" id="IPR005750">
    <property type="entry name" value="UDP_GlcNAc_COvinyl_MurA"/>
</dbReference>
<dbReference type="NCBIfam" id="TIGR01072">
    <property type="entry name" value="murA"/>
    <property type="match status" value="1"/>
</dbReference>
<dbReference type="NCBIfam" id="NF006873">
    <property type="entry name" value="PRK09369.1"/>
    <property type="match status" value="1"/>
</dbReference>
<dbReference type="NCBIfam" id="NF009470">
    <property type="entry name" value="PRK12830.1"/>
    <property type="match status" value="1"/>
</dbReference>
<dbReference type="PANTHER" id="PTHR43783">
    <property type="entry name" value="UDP-N-ACETYLGLUCOSAMINE 1-CARBOXYVINYLTRANSFERASE"/>
    <property type="match status" value="1"/>
</dbReference>
<dbReference type="PANTHER" id="PTHR43783:SF2">
    <property type="entry name" value="UDP-N-ACETYLGLUCOSAMINE 1-CARBOXYVINYLTRANSFERASE 2"/>
    <property type="match status" value="1"/>
</dbReference>
<dbReference type="Pfam" id="PF00275">
    <property type="entry name" value="EPSP_synthase"/>
    <property type="match status" value="1"/>
</dbReference>
<dbReference type="SUPFAM" id="SSF55205">
    <property type="entry name" value="EPT/RTPC-like"/>
    <property type="match status" value="1"/>
</dbReference>
<name>MURA2_STAAS</name>
<gene>
    <name evidence="1" type="primary">murA2</name>
    <name type="synonym">murZ</name>
    <name type="ordered locus">SAS2027</name>
</gene>
<feature type="chain" id="PRO_0000178923" description="UDP-N-acetylglucosamine 1-carboxyvinyltransferase 2">
    <location>
        <begin position="1"/>
        <end position="419"/>
    </location>
</feature>
<feature type="active site" description="Proton donor" evidence="1">
    <location>
        <position position="118"/>
    </location>
</feature>
<feature type="binding site" evidence="1">
    <location>
        <begin position="24"/>
        <end position="25"/>
    </location>
    <ligand>
        <name>phosphoenolpyruvate</name>
        <dbReference type="ChEBI" id="CHEBI:58702"/>
    </ligand>
</feature>
<feature type="binding site" evidence="1">
    <location>
        <position position="94"/>
    </location>
    <ligand>
        <name>UDP-N-acetyl-alpha-D-glucosamine</name>
        <dbReference type="ChEBI" id="CHEBI:57705"/>
    </ligand>
</feature>
<feature type="binding site" evidence="1">
    <location>
        <begin position="123"/>
        <end position="127"/>
    </location>
    <ligand>
        <name>UDP-N-acetyl-alpha-D-glucosamine</name>
        <dbReference type="ChEBI" id="CHEBI:57705"/>
    </ligand>
</feature>
<feature type="binding site" evidence="1">
    <location>
        <position position="307"/>
    </location>
    <ligand>
        <name>UDP-N-acetyl-alpha-D-glucosamine</name>
        <dbReference type="ChEBI" id="CHEBI:57705"/>
    </ligand>
</feature>
<feature type="binding site" evidence="1">
    <location>
        <position position="329"/>
    </location>
    <ligand>
        <name>UDP-N-acetyl-alpha-D-glucosamine</name>
        <dbReference type="ChEBI" id="CHEBI:57705"/>
    </ligand>
</feature>
<feature type="modified residue" description="2-(S-cysteinyl)pyruvic acid O-phosphothioketal" evidence="1">
    <location>
        <position position="118"/>
    </location>
</feature>
<proteinExistence type="inferred from homology"/>
<organism>
    <name type="scientific">Staphylococcus aureus (strain MSSA476)</name>
    <dbReference type="NCBI Taxonomy" id="282459"/>
    <lineage>
        <taxon>Bacteria</taxon>
        <taxon>Bacillati</taxon>
        <taxon>Bacillota</taxon>
        <taxon>Bacilli</taxon>
        <taxon>Bacillales</taxon>
        <taxon>Staphylococcaceae</taxon>
        <taxon>Staphylococcus</taxon>
    </lineage>
</organism>
<keyword id="KW-0131">Cell cycle</keyword>
<keyword id="KW-0132">Cell division</keyword>
<keyword id="KW-0133">Cell shape</keyword>
<keyword id="KW-0961">Cell wall biogenesis/degradation</keyword>
<keyword id="KW-0963">Cytoplasm</keyword>
<keyword id="KW-0573">Peptidoglycan synthesis</keyword>
<keyword id="KW-0670">Pyruvate</keyword>
<keyword id="KW-0808">Transferase</keyword>
<accession>Q6G7I6</accession>
<protein>
    <recommendedName>
        <fullName evidence="1">UDP-N-acetylglucosamine 1-carboxyvinyltransferase 2</fullName>
        <ecNumber evidence="1">2.5.1.7</ecNumber>
    </recommendedName>
    <alternativeName>
        <fullName evidence="1">Enoylpyruvate transferase 2</fullName>
    </alternativeName>
    <alternativeName>
        <fullName evidence="1">UDP-N-acetylglucosamine enolpyruvyl transferase 2</fullName>
        <shortName evidence="1">EPT 2</shortName>
    </alternativeName>
</protein>